<protein>
    <recommendedName>
        <fullName>Elongation factor 3B</fullName>
        <shortName>EF-3B</shortName>
        <ecNumber evidence="6">3.6.4.-</ecNumber>
    </recommendedName>
    <alternativeName>
        <fullName evidence="9">Eukaryotic elongation factor 3B</fullName>
        <shortName evidence="9">eEF3</shortName>
    </alternativeName>
    <alternativeName>
        <fullName>Homolog of EF-3</fullName>
    </alternativeName>
    <alternativeName>
        <fullName>Translation elongation factor 3B</fullName>
    </alternativeName>
</protein>
<sequence>MSDSQQSITVLEELFRKLETATSETREGISSELSSFLNGNIIEHDVPEVFFDEFQKAIQSKQKALNTLGAVAYIANETNLSPSVEPYIVATVPSVCSKAGSKDNDVQLAATKALKAIASAVNPVAVKALLPHLIHSLETSNKWKEKVAVLEVISVLVDAAKEQIALRMPELIPVLSESMWDTKKGVKEAATTTITKATETVDNKDIERFIPKLIECIANPNEVPETVHLLGATTFVAEVTPATLSIMVPLLSRGLAERETSIKRKAAVIIDNMCKLVEDPQVVAPFLGKLLPGLKNNFATIADPEAREVTLKALKTLRRVGNVGEDDVLPEISHAGDVSTTLGVIKELLEPEKVAPRFTIVVEYIAAIAANLIDERIIDQQTWFTHVTPYMTIFLHEKTAKEILDDFRKRAVDNIPVGPNFQDEEDEGEDLCNCEFSLAYGAKILLNKTQLRLKRGRRYGLCGPNGAGKSTLMRSIANGQVDGFPTQDECRTVYVEHDIDNTHSDMSVLDFVYSGNVGTKDVITSKLKEFGFSDEMIEMPIASLSGGWKMKLALARAVLKDADILLLDEPTNHLDTVNVEWLVNYLNTCGITSVIVSHDSGFLDKVCQYIIHYEGLKLRKYKGNLSEFVQKCPTAQSYYELGASDLEFQFPTPGYLEGVKTKQKAIVKVSNMTFQYPGTTKPQVSDVTFQCSLSSRIAVIGPNGAGKSTLINVLTGELLPTSGEVYTHENCRIAYIKQHAFAHIESHLDKTPSEYIQWRFQTGEDRETMDRANRQINENDAEAMNKIFKIEGTPRRVAGIHSRRKFKNTYEYECSFLLGENIGMKSERWVPMMSVDNAWLPRGELIESHSKMVAEIDMKEALASGQFRALTRKEIELHCAMLGLDSELVSHSRIRGLSGGQKVKLVLAACTWQRPHLIVLDEPTNYLDRDSLGALSKALKAFEGGVIIITHSAEFTKNLTDEVWAVKDGKMTPSGHNWVAGQGAGPRIEKKEEEGDKFDAMGNKINSGKKKSKLSSAELRKKKKERMKKKKEMGDEYVSSDEDF</sequence>
<accession>P53978</accession>
<accession>D6W1G4</accession>
<feature type="initiator methionine" description="Removed" evidence="1">
    <location>
        <position position="1"/>
    </location>
</feature>
<feature type="chain" id="PRO_0000093459" description="Elongation factor 3B">
    <location>
        <begin position="2"/>
        <end position="1044"/>
    </location>
</feature>
<feature type="repeat" description="HEAT 1">
    <location>
        <begin position="5"/>
        <end position="42"/>
    </location>
</feature>
<feature type="repeat" description="HEAT 2">
    <location>
        <begin position="86"/>
        <end position="123"/>
    </location>
</feature>
<feature type="repeat" description="HEAT 3">
    <location>
        <begin position="124"/>
        <end position="162"/>
    </location>
</feature>
<feature type="repeat" description="HEAT 4">
    <location>
        <begin position="166"/>
        <end position="203"/>
    </location>
</feature>
<feature type="repeat" description="HEAT 5">
    <location>
        <begin position="205"/>
        <end position="241"/>
    </location>
</feature>
<feature type="repeat" description="HEAT 6">
    <location>
        <begin position="242"/>
        <end position="279"/>
    </location>
</feature>
<feature type="repeat" description="HEAT 7">
    <location>
        <begin position="285"/>
        <end position="323"/>
    </location>
</feature>
<feature type="domain" description="ABC transporter 1" evidence="2">
    <location>
        <begin position="426"/>
        <end position="641"/>
    </location>
</feature>
<feature type="domain" description="ABC transporter 2" evidence="2">
    <location>
        <begin position="667"/>
        <end position="993"/>
    </location>
</feature>
<feature type="region of interest" description="Disordered" evidence="3">
    <location>
        <begin position="975"/>
        <end position="1044"/>
    </location>
</feature>
<feature type="compositionally biased region" description="Basic and acidic residues" evidence="3">
    <location>
        <begin position="987"/>
        <end position="999"/>
    </location>
</feature>
<feature type="compositionally biased region" description="Basic residues" evidence="3">
    <location>
        <begin position="1020"/>
        <end position="1031"/>
    </location>
</feature>
<feature type="binding site" evidence="1">
    <location>
        <position position="42"/>
    </location>
    <ligand>
        <name>ADP</name>
        <dbReference type="ChEBI" id="CHEBI:456216"/>
    </ligand>
</feature>
<feature type="binding site" evidence="1">
    <location>
        <position position="44"/>
    </location>
    <ligand>
        <name>ADP</name>
        <dbReference type="ChEBI" id="CHEBI:456216"/>
    </ligand>
</feature>
<feature type="binding site" evidence="1">
    <location>
        <position position="83"/>
    </location>
    <ligand>
        <name>ADP</name>
        <dbReference type="ChEBI" id="CHEBI:456216"/>
    </ligand>
</feature>
<feature type="binding site" evidence="1">
    <location>
        <position position="392"/>
    </location>
    <ligand>
        <name>ADP</name>
        <dbReference type="ChEBI" id="CHEBI:456216"/>
    </ligand>
</feature>
<feature type="binding site" evidence="1">
    <location>
        <position position="396"/>
    </location>
    <ligand>
        <name>ADP</name>
        <dbReference type="ChEBI" id="CHEBI:456216"/>
    </ligand>
</feature>
<feature type="binding site" evidence="1">
    <location>
        <position position="397"/>
    </location>
    <ligand>
        <name>ADP</name>
        <dbReference type="ChEBI" id="CHEBI:456216"/>
    </ligand>
</feature>
<feature type="binding site" evidence="1">
    <location>
        <position position="703"/>
    </location>
    <ligand>
        <name>ADP</name>
        <dbReference type="ChEBI" id="CHEBI:456216"/>
    </ligand>
</feature>
<feature type="binding site" evidence="1">
    <location>
        <position position="922"/>
    </location>
    <ligand>
        <name>ADP</name>
        <dbReference type="ChEBI" id="CHEBI:456216"/>
    </ligand>
</feature>
<feature type="binding site" evidence="1">
    <location>
        <position position="925"/>
    </location>
    <ligand>
        <name>ADP</name>
        <dbReference type="ChEBI" id="CHEBI:456216"/>
    </ligand>
</feature>
<feature type="binding site" evidence="1">
    <location>
        <position position="951"/>
    </location>
    <ligand>
        <name>ADP</name>
        <dbReference type="ChEBI" id="CHEBI:456216"/>
    </ligand>
</feature>
<feature type="modified residue" description="N-acetylserine" evidence="1">
    <location>
        <position position="2"/>
    </location>
</feature>
<feature type="modified residue" description="N6,N6,N6-trimethyllysine" evidence="1">
    <location>
        <position position="187"/>
    </location>
</feature>
<feature type="modified residue" description="N6,N6,N6-trimethyllysine" evidence="1">
    <location>
        <position position="196"/>
    </location>
</feature>
<feature type="modified residue" description="N6,N6,N6-trimethyllysine" evidence="1">
    <location>
        <position position="789"/>
    </location>
</feature>
<feature type="modified residue" description="Phosphothreonine" evidence="1">
    <location>
        <position position="972"/>
    </location>
</feature>
<feature type="modified residue" description="Phosphoserine" evidence="1">
    <location>
        <position position="974"/>
    </location>
</feature>
<feature type="modified residue" description="Phosphoserine" evidence="1">
    <location>
        <position position="1039"/>
    </location>
</feature>
<feature type="modified residue" description="Phosphoserine" evidence="1">
    <location>
        <position position="1040"/>
    </location>
</feature>
<comment type="function">
    <text evidence="1 5">Ribosome-dependent ATPase that promotes the translation of proteins required for detoxification of reactive oxygen species (PubMed:33260587). Required for the ATP-dependent release of deacylated tRNA from the ribosomal E-site during protein biosynthesis (By similarity). Stimulates the eEF1A-dependent binding of aminoacyl-tRNA to the ribosomal A-site, which has reduced affinity for tRNA as long as the E-site is occupied (By similarity). Assists translation termination by stimulating the release of nascent protein from the ribosome by release factors (By similarity).</text>
</comment>
<comment type="catalytic activity">
    <reaction evidence="6">
        <text>ATP + H2O = ADP + phosphate + H(+)</text>
        <dbReference type="Rhea" id="RHEA:13065"/>
        <dbReference type="ChEBI" id="CHEBI:15377"/>
        <dbReference type="ChEBI" id="CHEBI:15378"/>
        <dbReference type="ChEBI" id="CHEBI:30616"/>
        <dbReference type="ChEBI" id="CHEBI:43474"/>
        <dbReference type="ChEBI" id="CHEBI:456216"/>
    </reaction>
</comment>
<comment type="biophysicochemical properties">
    <kinetics>
        <KM evidence="6">0.102 mM for ATP</KM>
        <Vmax evidence="6">5.7 umol/min/mg enzyme with ATP as substrate</Vmax>
    </kinetics>
</comment>
<comment type="pathway">
    <text evidence="9">Protein biosynthesis; polypeptide chain elongation.</text>
</comment>
<comment type="subunit">
    <text evidence="1">Monomer.</text>
</comment>
<comment type="subcellular location">
    <subcellularLocation>
        <location evidence="1">Cytoplasm</location>
    </subcellularLocation>
</comment>
<comment type="developmental stage">
    <text evidence="6 7">Expressed in vegetatively growing cells at very low levels.</text>
</comment>
<comment type="induction">
    <text evidence="5">Increases in mild (0.5 mM) hydrogen peroxide stress, and decreases in stronger (1 mM) hydrogen peroxide stress.</text>
</comment>
<comment type="disruption phenotype">
    <text evidence="5 7">Decreases translation of proteins required for detoxification of reactive oxygen species (PubMed:33260587). Sensitive to hydrogen peroxide (PubMed:33260587). Increases GRX1 mRNA level during vegetative growth (PubMed:33260587). Normal vegetative cell population growth on glucose, galactose, and glycerol carbon sources, at high temperature, and at standard temperature (PubMed:33260587, PubMed:9778796). Normal mating and sporulation (PubMed:9778796).</text>
</comment>
<comment type="miscellaneous">
    <text evidence="4">Present with 125 molecules/cell in log phase SD medium.</text>
</comment>
<comment type="similarity">
    <text evidence="9">Belongs to the ABC transporter superfamily. ABCF family. EF3 subfamily.</text>
</comment>
<reference key="1">
    <citation type="journal article" date="1997" name="Nature">
        <title>The nucleotide sequence of Saccharomyces cerevisiae chromosome XIV and its evolutionary implications.</title>
        <authorList>
            <person name="Philippsen P."/>
            <person name="Kleine K."/>
            <person name="Poehlmann R."/>
            <person name="Duesterhoeft A."/>
            <person name="Hamberg K."/>
            <person name="Hegemann J.H."/>
            <person name="Obermaier B."/>
            <person name="Urrestarazu L.A."/>
            <person name="Aert R."/>
            <person name="Albermann K."/>
            <person name="Altmann R."/>
            <person name="Andre B."/>
            <person name="Baladron V."/>
            <person name="Ballesta J.P.G."/>
            <person name="Becam A.-M."/>
            <person name="Beinhauer J.D."/>
            <person name="Boskovic J."/>
            <person name="Buitrago M.J."/>
            <person name="Bussereau F."/>
            <person name="Coster F."/>
            <person name="Crouzet M."/>
            <person name="D'Angelo M."/>
            <person name="Dal Pero F."/>
            <person name="De Antoni A."/>
            <person name="del Rey F."/>
            <person name="Doignon F."/>
            <person name="Domdey H."/>
            <person name="Dubois E."/>
            <person name="Fiedler T.A."/>
            <person name="Fleig U."/>
            <person name="Floeth M."/>
            <person name="Fritz C."/>
            <person name="Gaillardin C."/>
            <person name="Garcia-Cantalejo J.M."/>
            <person name="Glansdorff N."/>
            <person name="Goffeau A."/>
            <person name="Gueldener U."/>
            <person name="Herbert C.J."/>
            <person name="Heumann K."/>
            <person name="Heuss-Neitzel D."/>
            <person name="Hilbert H."/>
            <person name="Hinni K."/>
            <person name="Iraqui Houssaini I."/>
            <person name="Jacquet M."/>
            <person name="Jimenez A."/>
            <person name="Jonniaux J.-L."/>
            <person name="Karpfinger-Hartl L."/>
            <person name="Lanfranchi G."/>
            <person name="Lepingle A."/>
            <person name="Levesque H."/>
            <person name="Lyck R."/>
            <person name="Maftahi M."/>
            <person name="Mallet L."/>
            <person name="Maurer C.T.C."/>
            <person name="Messenguy F."/>
            <person name="Mewes H.-W."/>
            <person name="Moestl D."/>
            <person name="Nasr F."/>
            <person name="Nicaud J.-M."/>
            <person name="Niedenthal R.K."/>
            <person name="Pandolfo D."/>
            <person name="Pierard A."/>
            <person name="Piravandi E."/>
            <person name="Planta R.J."/>
            <person name="Pohl T.M."/>
            <person name="Purnelle B."/>
            <person name="Rebischung C."/>
            <person name="Remacha M.A."/>
            <person name="Revuelta J.L."/>
            <person name="Rinke M."/>
            <person name="Saiz J.E."/>
            <person name="Sartorello F."/>
            <person name="Scherens B."/>
            <person name="Sen-Gupta M."/>
            <person name="Soler-Mira A."/>
            <person name="Urbanus J.H.M."/>
            <person name="Valle G."/>
            <person name="Van Dyck L."/>
            <person name="Verhasselt P."/>
            <person name="Vierendeels F."/>
            <person name="Vissers S."/>
            <person name="Voet M."/>
            <person name="Volckaert G."/>
            <person name="Wach A."/>
            <person name="Wambutt R."/>
            <person name="Wedler H."/>
            <person name="Zollner A."/>
            <person name="Hani J."/>
        </authorList>
    </citation>
    <scope>NUCLEOTIDE SEQUENCE [LARGE SCALE GENOMIC DNA]</scope>
    <source>
        <strain>ATCC 204508 / S288c</strain>
    </source>
</reference>
<reference key="2">
    <citation type="journal article" date="2014" name="G3 (Bethesda)">
        <title>The reference genome sequence of Saccharomyces cerevisiae: Then and now.</title>
        <authorList>
            <person name="Engel S.R."/>
            <person name="Dietrich F.S."/>
            <person name="Fisk D.G."/>
            <person name="Binkley G."/>
            <person name="Balakrishnan R."/>
            <person name="Costanzo M.C."/>
            <person name="Dwight S.S."/>
            <person name="Hitz B.C."/>
            <person name="Karra K."/>
            <person name="Nash R.S."/>
            <person name="Weng S."/>
            <person name="Wong E.D."/>
            <person name="Lloyd P."/>
            <person name="Skrzypek M.S."/>
            <person name="Miyasato S.R."/>
            <person name="Simison M."/>
            <person name="Cherry J.M."/>
        </authorList>
    </citation>
    <scope>GENOME REANNOTATION</scope>
    <source>
        <strain>ATCC 204508 / S288c</strain>
    </source>
</reference>
<reference key="3">
    <citation type="journal article" date="1998" name="Yeast">
        <title>Identification and kinetic analysis of a functional homolog of elongation factor 3, YEF3 in Saccharomyces cerevisiae.</title>
        <authorList>
            <person name="Sarthy A.V."/>
            <person name="McGonigal T."/>
            <person name="Capobianco J.O."/>
            <person name="Schmidt M."/>
            <person name="Green S.R."/>
            <person name="Moehle C.M."/>
            <person name="Goldman R.C."/>
        </authorList>
    </citation>
    <scope>CATALYTIC ACTIVITY</scope>
    <scope>BIOPHYSICOCHEMICAL PROPERTIES</scope>
    <scope>DEVELOPMENTAL STAGE</scope>
</reference>
<reference key="4">
    <citation type="journal article" date="1998" name="Yeast">
        <title>A highly conserved intraspecies homolog of the Saccharomyces cerevisiae elongation factor-3 encoded by the HEF3 gene.</title>
        <authorList>
            <person name="Maurice T.C."/>
            <person name="Mazzuci C.E."/>
            <person name="Ramanathan C.S."/>
            <person name="Rayn B.M."/>
            <person name="Warr G.A."/>
            <person name="Puziss J.W."/>
        </authorList>
    </citation>
    <scope>DEVELOPMENTAL STAGE</scope>
    <scope>DISRUPTION PHENOTYPE</scope>
</reference>
<reference key="5">
    <citation type="journal article" date="2003" name="Nature">
        <title>Global analysis of protein expression in yeast.</title>
        <authorList>
            <person name="Ghaemmaghami S."/>
            <person name="Huh W.-K."/>
            <person name="Bower K."/>
            <person name="Howson R.W."/>
            <person name="Belle A."/>
            <person name="Dephoure N."/>
            <person name="O'Shea E.K."/>
            <person name="Weissman J.S."/>
        </authorList>
    </citation>
    <scope>LEVEL OF PROTEIN EXPRESSION [LARGE SCALE ANALYSIS]</scope>
</reference>
<reference key="6">
    <citation type="journal article" date="2020" name="Genes (Basel)">
        <title>Eukaryotic Elongation Factor 3 Protects Saccharomyces cerevisiae Yeast from Oxidative Stress.</title>
        <authorList>
            <person name="Goscinska K."/>
            <person name="Shahmoradi Ghahe S."/>
            <person name="Domogala S."/>
            <person name="Topf U."/>
        </authorList>
    </citation>
    <scope>FUNCTION</scope>
    <scope>INDUCTION</scope>
    <scope>DISRUPTION PHENOTYPE</scope>
</reference>
<keyword id="KW-0007">Acetylation</keyword>
<keyword id="KW-0067">ATP-binding</keyword>
<keyword id="KW-0963">Cytoplasm</keyword>
<keyword id="KW-0251">Elongation factor</keyword>
<keyword id="KW-0378">Hydrolase</keyword>
<keyword id="KW-0488">Methylation</keyword>
<keyword id="KW-0547">Nucleotide-binding</keyword>
<keyword id="KW-0597">Phosphoprotein</keyword>
<keyword id="KW-0648">Protein biosynthesis</keyword>
<keyword id="KW-1185">Reference proteome</keyword>
<keyword id="KW-0677">Repeat</keyword>
<keyword id="KW-0694">RNA-binding</keyword>
<proteinExistence type="evidence at protein level"/>
<evidence type="ECO:0000250" key="1">
    <source>
        <dbReference type="UniProtKB" id="P16521"/>
    </source>
</evidence>
<evidence type="ECO:0000255" key="2">
    <source>
        <dbReference type="PROSITE-ProRule" id="PRU00434"/>
    </source>
</evidence>
<evidence type="ECO:0000256" key="3">
    <source>
        <dbReference type="SAM" id="MobiDB-lite"/>
    </source>
</evidence>
<evidence type="ECO:0000269" key="4">
    <source>
    </source>
</evidence>
<evidence type="ECO:0000269" key="5">
    <source>
    </source>
</evidence>
<evidence type="ECO:0000269" key="6">
    <source>
    </source>
</evidence>
<evidence type="ECO:0000269" key="7">
    <source>
    </source>
</evidence>
<evidence type="ECO:0000303" key="8">
    <source>
    </source>
</evidence>
<evidence type="ECO:0000305" key="9"/>
<evidence type="ECO:0000312" key="10">
    <source>
        <dbReference type="SGD" id="S000004959"/>
    </source>
</evidence>
<gene>
    <name evidence="8" type="primary">HEF3</name>
    <name type="synonym">YEF3B</name>
    <name type="synonym">ZRG7</name>
    <name evidence="10" type="ordered locus">YNL014W</name>
    <name type="ORF">N2846</name>
</gene>
<organism>
    <name type="scientific">Saccharomyces cerevisiae (strain ATCC 204508 / S288c)</name>
    <name type="common">Baker's yeast</name>
    <dbReference type="NCBI Taxonomy" id="559292"/>
    <lineage>
        <taxon>Eukaryota</taxon>
        <taxon>Fungi</taxon>
        <taxon>Dikarya</taxon>
        <taxon>Ascomycota</taxon>
        <taxon>Saccharomycotina</taxon>
        <taxon>Saccharomycetes</taxon>
        <taxon>Saccharomycetales</taxon>
        <taxon>Saccharomycetaceae</taxon>
        <taxon>Saccharomyces</taxon>
    </lineage>
</organism>
<name>EF3B_YEAST</name>
<dbReference type="EC" id="3.6.4.-" evidence="6"/>
<dbReference type="EMBL" id="Z71290">
    <property type="protein sequence ID" value="CAA95874.1"/>
    <property type="molecule type" value="Genomic_DNA"/>
</dbReference>
<dbReference type="EMBL" id="BK006947">
    <property type="protein sequence ID" value="DAA10530.1"/>
    <property type="molecule type" value="Genomic_DNA"/>
</dbReference>
<dbReference type="PIR" id="S62926">
    <property type="entry name" value="S62926"/>
</dbReference>
<dbReference type="RefSeq" id="NP_014384.3">
    <property type="nucleotide sequence ID" value="NM_001182853.3"/>
</dbReference>
<dbReference type="SMR" id="P53978"/>
<dbReference type="BioGRID" id="35812">
    <property type="interactions" value="86"/>
</dbReference>
<dbReference type="DIP" id="DIP-6529N"/>
<dbReference type="FunCoup" id="P53978">
    <property type="interactions" value="335"/>
</dbReference>
<dbReference type="IntAct" id="P53978">
    <property type="interactions" value="21"/>
</dbReference>
<dbReference type="MINT" id="P53978"/>
<dbReference type="STRING" id="4932.YNL014W"/>
<dbReference type="GlyGen" id="P53978">
    <property type="glycosylation" value="1 site"/>
</dbReference>
<dbReference type="iPTMnet" id="P53978"/>
<dbReference type="PaxDb" id="4932-YNL014W"/>
<dbReference type="PeptideAtlas" id="P53978"/>
<dbReference type="EnsemblFungi" id="YNL014W_mRNA">
    <property type="protein sequence ID" value="YNL014W"/>
    <property type="gene ID" value="YNL014W"/>
</dbReference>
<dbReference type="GeneID" id="855718"/>
<dbReference type="KEGG" id="sce:YNL014W"/>
<dbReference type="AGR" id="SGD:S000004959"/>
<dbReference type="SGD" id="S000004959">
    <property type="gene designation" value="HEF3"/>
</dbReference>
<dbReference type="VEuPathDB" id="FungiDB:YNL014W"/>
<dbReference type="eggNOG" id="KOG0062">
    <property type="taxonomic scope" value="Eukaryota"/>
</dbReference>
<dbReference type="eggNOG" id="KOG1242">
    <property type="taxonomic scope" value="Eukaryota"/>
</dbReference>
<dbReference type="GeneTree" id="ENSGT00940000176346"/>
<dbReference type="HOGENOM" id="CLU_002848_0_0_1"/>
<dbReference type="InParanoid" id="P53978"/>
<dbReference type="OMA" id="ELHCAML"/>
<dbReference type="OrthoDB" id="2110130at2759"/>
<dbReference type="BioCyc" id="YEAST:G3O-33053-MONOMER"/>
<dbReference type="UniPathway" id="UPA00345"/>
<dbReference type="BioGRID-ORCS" id="855718">
    <property type="hits" value="2 hits in 10 CRISPR screens"/>
</dbReference>
<dbReference type="CD-CODE" id="E03F929F">
    <property type="entry name" value="Stress granule"/>
</dbReference>
<dbReference type="PRO" id="PR:P53978"/>
<dbReference type="Proteomes" id="UP000002311">
    <property type="component" value="Chromosome XIV"/>
</dbReference>
<dbReference type="RNAct" id="P53978">
    <property type="molecule type" value="protein"/>
</dbReference>
<dbReference type="GO" id="GO:0022626">
    <property type="term" value="C:cytosolic ribosome"/>
    <property type="evidence" value="ECO:0000353"/>
    <property type="project" value="SGD"/>
</dbReference>
<dbReference type="GO" id="GO:0005524">
    <property type="term" value="F:ATP binding"/>
    <property type="evidence" value="ECO:0000318"/>
    <property type="project" value="GO_Central"/>
</dbReference>
<dbReference type="GO" id="GO:0016887">
    <property type="term" value="F:ATP hydrolysis activity"/>
    <property type="evidence" value="ECO:0000314"/>
    <property type="project" value="SGD"/>
</dbReference>
<dbReference type="GO" id="GO:0003723">
    <property type="term" value="F:RNA binding"/>
    <property type="evidence" value="ECO:0007669"/>
    <property type="project" value="UniProtKB-KW"/>
</dbReference>
<dbReference type="GO" id="GO:0003746">
    <property type="term" value="F:translation elongation factor activity"/>
    <property type="evidence" value="ECO:0000315"/>
    <property type="project" value="UniProtKB"/>
</dbReference>
<dbReference type="GO" id="GO:0034599">
    <property type="term" value="P:cellular response to oxidative stress"/>
    <property type="evidence" value="ECO:0000315"/>
    <property type="project" value="UniProtKB"/>
</dbReference>
<dbReference type="GO" id="GO:0002182">
    <property type="term" value="P:cytoplasmic translational elongation"/>
    <property type="evidence" value="ECO:0000315"/>
    <property type="project" value="UniProtKB"/>
</dbReference>
<dbReference type="GO" id="GO:0006414">
    <property type="term" value="P:translational elongation"/>
    <property type="evidence" value="ECO:0000316"/>
    <property type="project" value="SGD"/>
</dbReference>
<dbReference type="CDD" id="cd03221">
    <property type="entry name" value="ABCF_EF-3"/>
    <property type="match status" value="1"/>
</dbReference>
<dbReference type="CDD" id="cd18626">
    <property type="entry name" value="CD_eEF3"/>
    <property type="match status" value="1"/>
</dbReference>
<dbReference type="FunFam" id="1.20.1390.20:FF:000001">
    <property type="entry name" value="Elongation factor 3"/>
    <property type="match status" value="1"/>
</dbReference>
<dbReference type="FunFam" id="1.25.10.10:FF:000076">
    <property type="entry name" value="Elongation factor 3"/>
    <property type="match status" value="1"/>
</dbReference>
<dbReference type="FunFam" id="2.40.50.990:FF:000001">
    <property type="entry name" value="Elongation factor 3"/>
    <property type="match status" value="1"/>
</dbReference>
<dbReference type="FunFam" id="3.40.50.300:FF:000193">
    <property type="entry name" value="Probable Elongation factor 3"/>
    <property type="match status" value="1"/>
</dbReference>
<dbReference type="Gene3D" id="1.20.1390.20">
    <property type="match status" value="1"/>
</dbReference>
<dbReference type="Gene3D" id="2.40.50.990">
    <property type="match status" value="1"/>
</dbReference>
<dbReference type="Gene3D" id="1.25.10.10">
    <property type="entry name" value="Leucine-rich Repeat Variant"/>
    <property type="match status" value="1"/>
</dbReference>
<dbReference type="Gene3D" id="3.40.50.300">
    <property type="entry name" value="P-loop containing nucleotide triphosphate hydrolases"/>
    <property type="match status" value="2"/>
</dbReference>
<dbReference type="InterPro" id="IPR003593">
    <property type="entry name" value="AAA+_ATPase"/>
</dbReference>
<dbReference type="InterPro" id="IPR003439">
    <property type="entry name" value="ABC_transporter-like_ATP-bd"/>
</dbReference>
<dbReference type="InterPro" id="IPR017871">
    <property type="entry name" value="ABC_transporter-like_CS"/>
</dbReference>
<dbReference type="InterPro" id="IPR050611">
    <property type="entry name" value="ABCF_EF3_subfamily"/>
</dbReference>
<dbReference type="InterPro" id="IPR011989">
    <property type="entry name" value="ARM-like"/>
</dbReference>
<dbReference type="InterPro" id="IPR016024">
    <property type="entry name" value="ARM-type_fold"/>
</dbReference>
<dbReference type="InterPro" id="IPR015688">
    <property type="entry name" value="eEF3_ABC2_chromodomain-like"/>
</dbReference>
<dbReference type="InterPro" id="IPR047038">
    <property type="entry name" value="eEF3_chromodomain-like_sf"/>
</dbReference>
<dbReference type="InterPro" id="IPR040533">
    <property type="entry name" value="EF3_4HB"/>
</dbReference>
<dbReference type="InterPro" id="IPR047036">
    <property type="entry name" value="EF3_4HB_sf"/>
</dbReference>
<dbReference type="InterPro" id="IPR021133">
    <property type="entry name" value="HEAT_type_2"/>
</dbReference>
<dbReference type="InterPro" id="IPR027417">
    <property type="entry name" value="P-loop_NTPase"/>
</dbReference>
<dbReference type="PANTHER" id="PTHR19211">
    <property type="entry name" value="ATP-BINDING TRANSPORT PROTEIN-RELATED"/>
    <property type="match status" value="1"/>
</dbReference>
<dbReference type="PANTHER" id="PTHR19211:SF5">
    <property type="entry name" value="ELONGATION FACTOR 3A-RELATED"/>
    <property type="match status" value="1"/>
</dbReference>
<dbReference type="Pfam" id="PF17947">
    <property type="entry name" value="4HB"/>
    <property type="match status" value="1"/>
</dbReference>
<dbReference type="Pfam" id="PF00005">
    <property type="entry name" value="ABC_tran"/>
    <property type="match status" value="3"/>
</dbReference>
<dbReference type="Pfam" id="PF24984">
    <property type="entry name" value="HEAT_EF3_GNC1"/>
    <property type="match status" value="1"/>
</dbReference>
<dbReference type="Pfam" id="PF24987">
    <property type="entry name" value="HEAT_EF3_N"/>
    <property type="match status" value="1"/>
</dbReference>
<dbReference type="SMART" id="SM00382">
    <property type="entry name" value="AAA"/>
    <property type="match status" value="2"/>
</dbReference>
<dbReference type="SUPFAM" id="SSF48371">
    <property type="entry name" value="ARM repeat"/>
    <property type="match status" value="1"/>
</dbReference>
<dbReference type="SUPFAM" id="SSF52540">
    <property type="entry name" value="P-loop containing nucleoside triphosphate hydrolases"/>
    <property type="match status" value="2"/>
</dbReference>
<dbReference type="PROSITE" id="PS00211">
    <property type="entry name" value="ABC_TRANSPORTER_1"/>
    <property type="match status" value="2"/>
</dbReference>
<dbReference type="PROSITE" id="PS50893">
    <property type="entry name" value="ABC_TRANSPORTER_2"/>
    <property type="match status" value="2"/>
</dbReference>
<dbReference type="PROSITE" id="PS50077">
    <property type="entry name" value="HEAT_REPEAT"/>
    <property type="match status" value="1"/>
</dbReference>